<name>ISPG_SYNP6</name>
<dbReference type="EC" id="1.17.7.1" evidence="1"/>
<dbReference type="EMBL" id="AP008231">
    <property type="protein sequence ID" value="BAD79007.1"/>
    <property type="molecule type" value="Genomic_DNA"/>
</dbReference>
<dbReference type="RefSeq" id="WP_011243129.1">
    <property type="nucleotide sequence ID" value="NZ_CP085785.1"/>
</dbReference>
<dbReference type="SMR" id="Q5N3W3"/>
<dbReference type="GeneID" id="72429547"/>
<dbReference type="KEGG" id="syc:syc0817_d"/>
<dbReference type="eggNOG" id="COG0821">
    <property type="taxonomic scope" value="Bacteria"/>
</dbReference>
<dbReference type="UniPathway" id="UPA00056">
    <property type="reaction ID" value="UER00096"/>
</dbReference>
<dbReference type="Proteomes" id="UP000001175">
    <property type="component" value="Chromosome"/>
</dbReference>
<dbReference type="GO" id="GO:0051539">
    <property type="term" value="F:4 iron, 4 sulfur cluster binding"/>
    <property type="evidence" value="ECO:0007669"/>
    <property type="project" value="UniProtKB-UniRule"/>
</dbReference>
<dbReference type="GO" id="GO:0046429">
    <property type="term" value="F:4-hydroxy-3-methylbut-2-en-1-yl diphosphate synthase activity (ferredoxin)"/>
    <property type="evidence" value="ECO:0007669"/>
    <property type="project" value="UniProtKB-UniRule"/>
</dbReference>
<dbReference type="GO" id="GO:0005506">
    <property type="term" value="F:iron ion binding"/>
    <property type="evidence" value="ECO:0007669"/>
    <property type="project" value="InterPro"/>
</dbReference>
<dbReference type="GO" id="GO:0019288">
    <property type="term" value="P:isopentenyl diphosphate biosynthetic process, methylerythritol 4-phosphate pathway"/>
    <property type="evidence" value="ECO:0007669"/>
    <property type="project" value="UniProtKB-UniRule"/>
</dbReference>
<dbReference type="GO" id="GO:0016114">
    <property type="term" value="P:terpenoid biosynthetic process"/>
    <property type="evidence" value="ECO:0007669"/>
    <property type="project" value="InterPro"/>
</dbReference>
<dbReference type="FunFam" id="3.20.20.20:FF:000005">
    <property type="entry name" value="4-hydroxy-3-methylbut-2-en-1-yl diphosphate synthase (flavodoxin)"/>
    <property type="match status" value="1"/>
</dbReference>
<dbReference type="FunFam" id="3.30.413.10:FF:000006">
    <property type="entry name" value="4-hydroxy-3-methylbut-2-en-1-yl diphosphate synthase (flavodoxin)"/>
    <property type="match status" value="1"/>
</dbReference>
<dbReference type="Gene3D" id="3.20.20.20">
    <property type="entry name" value="Dihydropteroate synthase-like"/>
    <property type="match status" value="1"/>
</dbReference>
<dbReference type="Gene3D" id="3.30.413.10">
    <property type="entry name" value="Sulfite Reductase Hemoprotein, domain 1"/>
    <property type="match status" value="1"/>
</dbReference>
<dbReference type="HAMAP" id="MF_00159">
    <property type="entry name" value="IspG"/>
    <property type="match status" value="1"/>
</dbReference>
<dbReference type="InterPro" id="IPR011005">
    <property type="entry name" value="Dihydropteroate_synth-like_sf"/>
</dbReference>
<dbReference type="InterPro" id="IPR016425">
    <property type="entry name" value="IspG_bac"/>
</dbReference>
<dbReference type="InterPro" id="IPR004588">
    <property type="entry name" value="IspG_bac-typ"/>
</dbReference>
<dbReference type="InterPro" id="IPR045854">
    <property type="entry name" value="NO2/SO3_Rdtase_4Fe4S_sf"/>
</dbReference>
<dbReference type="NCBIfam" id="TIGR00612">
    <property type="entry name" value="ispG_gcpE"/>
    <property type="match status" value="1"/>
</dbReference>
<dbReference type="NCBIfam" id="NF001540">
    <property type="entry name" value="PRK00366.1"/>
    <property type="match status" value="1"/>
</dbReference>
<dbReference type="PANTHER" id="PTHR30454">
    <property type="entry name" value="4-HYDROXY-3-METHYLBUT-2-EN-1-YL DIPHOSPHATE SYNTHASE"/>
    <property type="match status" value="1"/>
</dbReference>
<dbReference type="PANTHER" id="PTHR30454:SF0">
    <property type="entry name" value="4-HYDROXY-3-METHYLBUT-2-EN-1-YL DIPHOSPHATE SYNTHASE (FERREDOXIN), CHLOROPLASTIC"/>
    <property type="match status" value="1"/>
</dbReference>
<dbReference type="Pfam" id="PF04551">
    <property type="entry name" value="GcpE"/>
    <property type="match status" value="1"/>
</dbReference>
<dbReference type="PIRSF" id="PIRSF004640">
    <property type="entry name" value="IspG"/>
    <property type="match status" value="1"/>
</dbReference>
<dbReference type="SUPFAM" id="SSF56014">
    <property type="entry name" value="Nitrite and sulphite reductase 4Fe-4S domain-like"/>
    <property type="match status" value="1"/>
</dbReference>
<sequence>MQTLSTPSTTATEFDTVIHRRPTRSVRVGDIWIGSRHPVVVQSMINEDTLDIDGSVAAIRRLHEIGCEIVRVTVPSLGHAKAVGDIKKKLQDTYRDVPLVADVHHNGMKIALEVAKHVDKVRINPGLYVFEKPDPNRQGYTPEEFERIGKQIRDTLEPLVTSLREQDKAMRIGVNHGSLAERMLFTYGDTPEGMVESALEFLRLCEEMDFRNLVISMKASRAPVMMAAYRLMAKRMDDLGMDYPLHLGVTEAGDGDYGRIKSTVGIGTLLAEGIGDTIRVSLTEAPENEIPVCYSILQALGLRKTMVEYVACPSCGRTLFNLEEVLHKVRAATNHLVGLDIAVMGCIVNGPGEMADADYGYVGKTPGTIALYRGRDEIKRVPEEQGVEELINLIKADGRWVEPEPIA</sequence>
<keyword id="KW-0004">4Fe-4S</keyword>
<keyword id="KW-0408">Iron</keyword>
<keyword id="KW-0411">Iron-sulfur</keyword>
<keyword id="KW-0414">Isoprene biosynthesis</keyword>
<keyword id="KW-0479">Metal-binding</keyword>
<keyword id="KW-0560">Oxidoreductase</keyword>
<organism>
    <name type="scientific">Synechococcus sp. (strain ATCC 27144 / PCC 6301 / SAUG 1402/1)</name>
    <name type="common">Anacystis nidulans</name>
    <dbReference type="NCBI Taxonomy" id="269084"/>
    <lineage>
        <taxon>Bacteria</taxon>
        <taxon>Bacillati</taxon>
        <taxon>Cyanobacteriota</taxon>
        <taxon>Cyanophyceae</taxon>
        <taxon>Synechococcales</taxon>
        <taxon>Synechococcaceae</taxon>
        <taxon>Synechococcus</taxon>
    </lineage>
</organism>
<comment type="function">
    <text evidence="1">Converts 2C-methyl-D-erythritol 2,4-cyclodiphosphate (ME-2,4cPP) into 1-hydroxy-2-methyl-2-(E)-butenyl 4-diphosphate.</text>
</comment>
<comment type="catalytic activity">
    <reaction evidence="1">
        <text>(2E)-4-hydroxy-3-methylbut-2-enyl diphosphate + 2 oxidized [2Fe-2S]-[ferredoxin] + H2O = 2-C-methyl-D-erythritol 2,4-cyclic diphosphate + 2 reduced [2Fe-2S]-[ferredoxin] + H(+)</text>
        <dbReference type="Rhea" id="RHEA:26119"/>
        <dbReference type="Rhea" id="RHEA-COMP:10000"/>
        <dbReference type="Rhea" id="RHEA-COMP:10001"/>
        <dbReference type="ChEBI" id="CHEBI:15377"/>
        <dbReference type="ChEBI" id="CHEBI:15378"/>
        <dbReference type="ChEBI" id="CHEBI:33737"/>
        <dbReference type="ChEBI" id="CHEBI:33738"/>
        <dbReference type="ChEBI" id="CHEBI:58483"/>
        <dbReference type="ChEBI" id="CHEBI:128753"/>
        <dbReference type="EC" id="1.17.7.1"/>
    </reaction>
</comment>
<comment type="cofactor">
    <cofactor evidence="1">
        <name>[4Fe-4S] cluster</name>
        <dbReference type="ChEBI" id="CHEBI:49883"/>
    </cofactor>
    <text evidence="1">Binds 1 [4Fe-4S] cluster.</text>
</comment>
<comment type="pathway">
    <text evidence="1">Isoprenoid biosynthesis; isopentenyl diphosphate biosynthesis via DXP pathway; isopentenyl diphosphate from 1-deoxy-D-xylulose 5-phosphate: step 5/6.</text>
</comment>
<comment type="similarity">
    <text evidence="1">Belongs to the IspG family.</text>
</comment>
<feature type="chain" id="PRO_0000190639" description="4-hydroxy-3-methylbut-2-en-1-yl diphosphate synthase (ferredoxin)">
    <location>
        <begin position="1"/>
        <end position="407"/>
    </location>
</feature>
<feature type="binding site" evidence="1">
    <location>
        <position position="312"/>
    </location>
    <ligand>
        <name>[4Fe-4S] cluster</name>
        <dbReference type="ChEBI" id="CHEBI:49883"/>
    </ligand>
</feature>
<feature type="binding site" evidence="1">
    <location>
        <position position="315"/>
    </location>
    <ligand>
        <name>[4Fe-4S] cluster</name>
        <dbReference type="ChEBI" id="CHEBI:49883"/>
    </ligand>
</feature>
<feature type="binding site" evidence="1">
    <location>
        <position position="346"/>
    </location>
    <ligand>
        <name>[4Fe-4S] cluster</name>
        <dbReference type="ChEBI" id="CHEBI:49883"/>
    </ligand>
</feature>
<feature type="binding site" evidence="1">
    <location>
        <position position="353"/>
    </location>
    <ligand>
        <name>[4Fe-4S] cluster</name>
        <dbReference type="ChEBI" id="CHEBI:49883"/>
    </ligand>
</feature>
<reference key="1">
    <citation type="journal article" date="2007" name="Photosyn. Res.">
        <title>Complete nucleotide sequence of the freshwater unicellular cyanobacterium Synechococcus elongatus PCC 6301 chromosome: gene content and organization.</title>
        <authorList>
            <person name="Sugita C."/>
            <person name="Ogata K."/>
            <person name="Shikata M."/>
            <person name="Jikuya H."/>
            <person name="Takano J."/>
            <person name="Furumichi M."/>
            <person name="Kanehisa M."/>
            <person name="Omata T."/>
            <person name="Sugiura M."/>
            <person name="Sugita M."/>
        </authorList>
    </citation>
    <scope>NUCLEOTIDE SEQUENCE [LARGE SCALE GENOMIC DNA]</scope>
    <source>
        <strain>ATCC 27144 / PCC 6301 / SAUG 1402/1</strain>
    </source>
</reference>
<protein>
    <recommendedName>
        <fullName evidence="1">4-hydroxy-3-methylbut-2-en-1-yl diphosphate synthase (ferredoxin)</fullName>
        <ecNumber evidence="1">1.17.7.1</ecNumber>
    </recommendedName>
    <alternativeName>
        <fullName evidence="1">1-hydroxy-2-methyl-2-(E)-butenyl 4-diphosphate synthase</fullName>
    </alternativeName>
</protein>
<proteinExistence type="inferred from homology"/>
<gene>
    <name evidence="1" type="primary">ispG</name>
    <name type="ordered locus">syc0817_d</name>
</gene>
<accession>Q5N3W3</accession>
<evidence type="ECO:0000255" key="1">
    <source>
        <dbReference type="HAMAP-Rule" id="MF_00159"/>
    </source>
</evidence>